<feature type="chain" id="PRO_0000318884" description="Transcriptional regulator MraZ">
    <location>
        <begin position="1"/>
        <end position="154"/>
    </location>
</feature>
<feature type="domain" description="SpoVT-AbrB 1" evidence="2">
    <location>
        <begin position="6"/>
        <end position="53"/>
    </location>
</feature>
<feature type="domain" description="SpoVT-AbrB 2" evidence="2">
    <location>
        <begin position="83"/>
        <end position="126"/>
    </location>
</feature>
<name>MRAZ_PHOV8</name>
<comment type="subunit">
    <text evidence="1">Forms oligomers.</text>
</comment>
<comment type="subcellular location">
    <subcellularLocation>
        <location evidence="1">Cytoplasm</location>
        <location evidence="1">Nucleoid</location>
    </subcellularLocation>
</comment>
<comment type="similarity">
    <text evidence="1">Belongs to the MraZ family.</text>
</comment>
<evidence type="ECO:0000255" key="1">
    <source>
        <dbReference type="HAMAP-Rule" id="MF_01008"/>
    </source>
</evidence>
<evidence type="ECO:0000255" key="2">
    <source>
        <dbReference type="PROSITE-ProRule" id="PRU01076"/>
    </source>
</evidence>
<protein>
    <recommendedName>
        <fullName>Transcriptional regulator MraZ</fullName>
    </recommendedName>
</protein>
<keyword id="KW-0963">Cytoplasm</keyword>
<keyword id="KW-0238">DNA-binding</keyword>
<keyword id="KW-0677">Repeat</keyword>
<keyword id="KW-0804">Transcription</keyword>
<keyword id="KW-0805">Transcription regulation</keyword>
<sequence length="154" mass="18115">MRFLGNSEAKTDAKGRVFLPAVFRKQLQAASQECLILRKDTYQDCLVLYPENVWNEQMNELRCKLNRWNSRHQMIFRQFVSDVEVITLDGNGRFLIPKRYLKLAKIQQDVRFIGLDDTIEIWSKEIADKPFITPEDFGKELEEIMGTNNNVEIE</sequence>
<reference key="1">
    <citation type="journal article" date="2007" name="PLoS Biol.">
        <title>Evolution of symbiotic bacteria in the distal human intestine.</title>
        <authorList>
            <person name="Xu J."/>
            <person name="Mahowald M.A."/>
            <person name="Ley R.E."/>
            <person name="Lozupone C.A."/>
            <person name="Hamady M."/>
            <person name="Martens E.C."/>
            <person name="Henrissat B."/>
            <person name="Coutinho P.M."/>
            <person name="Minx P."/>
            <person name="Latreille P."/>
            <person name="Cordum H."/>
            <person name="Van Brunt A."/>
            <person name="Kim K."/>
            <person name="Fulton R.S."/>
            <person name="Fulton L.A."/>
            <person name="Clifton S.W."/>
            <person name="Wilson R.K."/>
            <person name="Knight R.D."/>
            <person name="Gordon J.I."/>
        </authorList>
    </citation>
    <scope>NUCLEOTIDE SEQUENCE [LARGE SCALE GENOMIC DNA]</scope>
    <source>
        <strain>ATCC 8482 / DSM 1447 / JCM 5826 / CCUG 4940 / NBRC 14291 / NCTC 11154</strain>
    </source>
</reference>
<gene>
    <name evidence="1" type="primary">mraZ</name>
    <name type="ordered locus">BVU_1405</name>
</gene>
<organism>
    <name type="scientific">Phocaeicola vulgatus (strain ATCC 8482 / DSM 1447 / JCM 5826 / CCUG 4940 / NBRC 14291 / NCTC 11154)</name>
    <name type="common">Bacteroides vulgatus</name>
    <dbReference type="NCBI Taxonomy" id="435590"/>
    <lineage>
        <taxon>Bacteria</taxon>
        <taxon>Pseudomonadati</taxon>
        <taxon>Bacteroidota</taxon>
        <taxon>Bacteroidia</taxon>
        <taxon>Bacteroidales</taxon>
        <taxon>Bacteroidaceae</taxon>
        <taxon>Phocaeicola</taxon>
    </lineage>
</organism>
<proteinExistence type="inferred from homology"/>
<dbReference type="EMBL" id="CP000139">
    <property type="protein sequence ID" value="ABR39093.1"/>
    <property type="molecule type" value="Genomic_DNA"/>
</dbReference>
<dbReference type="RefSeq" id="WP_005845333.1">
    <property type="nucleotide sequence ID" value="NZ_JANSWM010000067.1"/>
</dbReference>
<dbReference type="SMR" id="A6L079"/>
<dbReference type="STRING" id="435590.BVU_1405"/>
<dbReference type="PaxDb" id="435590-BVU_1405"/>
<dbReference type="GeneID" id="5302371"/>
<dbReference type="KEGG" id="bvu:BVU_1405"/>
<dbReference type="eggNOG" id="COG2001">
    <property type="taxonomic scope" value="Bacteria"/>
</dbReference>
<dbReference type="HOGENOM" id="CLU_107907_0_1_10"/>
<dbReference type="BioCyc" id="BVUL435590:G1G59-1468-MONOMER"/>
<dbReference type="Proteomes" id="UP000002861">
    <property type="component" value="Chromosome"/>
</dbReference>
<dbReference type="GO" id="GO:0005737">
    <property type="term" value="C:cytoplasm"/>
    <property type="evidence" value="ECO:0007669"/>
    <property type="project" value="UniProtKB-UniRule"/>
</dbReference>
<dbReference type="GO" id="GO:0009295">
    <property type="term" value="C:nucleoid"/>
    <property type="evidence" value="ECO:0007669"/>
    <property type="project" value="UniProtKB-SubCell"/>
</dbReference>
<dbReference type="GO" id="GO:0003700">
    <property type="term" value="F:DNA-binding transcription factor activity"/>
    <property type="evidence" value="ECO:0007669"/>
    <property type="project" value="UniProtKB-UniRule"/>
</dbReference>
<dbReference type="GO" id="GO:0000976">
    <property type="term" value="F:transcription cis-regulatory region binding"/>
    <property type="evidence" value="ECO:0007669"/>
    <property type="project" value="TreeGrafter"/>
</dbReference>
<dbReference type="GO" id="GO:2000143">
    <property type="term" value="P:negative regulation of DNA-templated transcription initiation"/>
    <property type="evidence" value="ECO:0007669"/>
    <property type="project" value="TreeGrafter"/>
</dbReference>
<dbReference type="CDD" id="cd16321">
    <property type="entry name" value="MraZ_C"/>
    <property type="match status" value="1"/>
</dbReference>
<dbReference type="CDD" id="cd16320">
    <property type="entry name" value="MraZ_N"/>
    <property type="match status" value="1"/>
</dbReference>
<dbReference type="Gene3D" id="3.40.1550.20">
    <property type="entry name" value="Transcriptional regulator MraZ domain"/>
    <property type="match status" value="1"/>
</dbReference>
<dbReference type="HAMAP" id="MF_01008">
    <property type="entry name" value="MraZ"/>
    <property type="match status" value="1"/>
</dbReference>
<dbReference type="InterPro" id="IPR003444">
    <property type="entry name" value="MraZ"/>
</dbReference>
<dbReference type="InterPro" id="IPR035644">
    <property type="entry name" value="MraZ_C"/>
</dbReference>
<dbReference type="InterPro" id="IPR020603">
    <property type="entry name" value="MraZ_dom"/>
</dbReference>
<dbReference type="InterPro" id="IPR035642">
    <property type="entry name" value="MraZ_N"/>
</dbReference>
<dbReference type="InterPro" id="IPR038619">
    <property type="entry name" value="MraZ_sf"/>
</dbReference>
<dbReference type="InterPro" id="IPR007159">
    <property type="entry name" value="SpoVT-AbrB_dom"/>
</dbReference>
<dbReference type="InterPro" id="IPR037914">
    <property type="entry name" value="SpoVT-AbrB_sf"/>
</dbReference>
<dbReference type="NCBIfam" id="NF001483">
    <property type="entry name" value="PRK00326.3-5"/>
    <property type="match status" value="1"/>
</dbReference>
<dbReference type="PANTHER" id="PTHR34701">
    <property type="entry name" value="TRANSCRIPTIONAL REGULATOR MRAZ"/>
    <property type="match status" value="1"/>
</dbReference>
<dbReference type="PANTHER" id="PTHR34701:SF1">
    <property type="entry name" value="TRANSCRIPTIONAL REGULATOR MRAZ"/>
    <property type="match status" value="1"/>
</dbReference>
<dbReference type="Pfam" id="PF02381">
    <property type="entry name" value="MraZ"/>
    <property type="match status" value="2"/>
</dbReference>
<dbReference type="SUPFAM" id="SSF89447">
    <property type="entry name" value="AbrB/MazE/MraZ-like"/>
    <property type="match status" value="1"/>
</dbReference>
<dbReference type="PROSITE" id="PS51740">
    <property type="entry name" value="SPOVT_ABRB"/>
    <property type="match status" value="2"/>
</dbReference>
<accession>A6L079</accession>